<dbReference type="EMBL" id="X79066">
    <property type="protein sequence ID" value="CAA55670.1"/>
    <property type="molecule type" value="mRNA"/>
</dbReference>
<dbReference type="EMBL" id="X79067">
    <property type="protein sequence ID" value="CAA55670.1"/>
    <property type="status" value="JOINED"/>
    <property type="molecule type" value="mRNA"/>
</dbReference>
<dbReference type="EMBL" id="X99404">
    <property type="protein sequence ID" value="CAA67781.1"/>
    <property type="molecule type" value="mRNA"/>
</dbReference>
<dbReference type="EMBL" id="BT019468">
    <property type="protein sequence ID" value="AAV38275.1"/>
    <property type="molecule type" value="mRNA"/>
</dbReference>
<dbReference type="EMBL" id="BC018340">
    <property type="protein sequence ID" value="AAH18340.1"/>
    <property type="molecule type" value="mRNA"/>
</dbReference>
<dbReference type="CCDS" id="CCDS9791.1"/>
<dbReference type="PIR" id="S34854">
    <property type="entry name" value="S34854"/>
</dbReference>
<dbReference type="RefSeq" id="NP_001231627.1">
    <property type="nucleotide sequence ID" value="NM_001244698.2"/>
</dbReference>
<dbReference type="RefSeq" id="NP_001231630.1">
    <property type="nucleotide sequence ID" value="NM_001244701.1"/>
</dbReference>
<dbReference type="RefSeq" id="NP_004917.2">
    <property type="nucleotide sequence ID" value="NM_004926.3"/>
</dbReference>
<dbReference type="RefSeq" id="XP_054232624.1">
    <property type="nucleotide sequence ID" value="XM_054376649.1"/>
</dbReference>
<dbReference type="PDB" id="1W0V">
    <property type="method" value="X-ray"/>
    <property type="resolution" value="2.27 A"/>
    <property type="chains" value="C=325-333"/>
</dbReference>
<dbReference type="PDB" id="1W0W">
    <property type="method" value="X-ray"/>
    <property type="resolution" value="2.10 A"/>
    <property type="chains" value="C=325-333"/>
</dbReference>
<dbReference type="PDBsum" id="1W0V"/>
<dbReference type="PDBsum" id="1W0W"/>
<dbReference type="SMR" id="Q07352"/>
<dbReference type="BioGRID" id="107144">
    <property type="interactions" value="31"/>
</dbReference>
<dbReference type="CORUM" id="Q07352"/>
<dbReference type="FunCoup" id="Q07352">
    <property type="interactions" value="1128"/>
</dbReference>
<dbReference type="IntAct" id="Q07352">
    <property type="interactions" value="52"/>
</dbReference>
<dbReference type="MINT" id="Q07352"/>
<dbReference type="STRING" id="9606.ENSP00000337386"/>
<dbReference type="iPTMnet" id="Q07352"/>
<dbReference type="PhosphoSitePlus" id="Q07352"/>
<dbReference type="BioMuta" id="ZFP36L1"/>
<dbReference type="DMDM" id="1351254"/>
<dbReference type="jPOST" id="Q07352"/>
<dbReference type="MassIVE" id="Q07352"/>
<dbReference type="PaxDb" id="9606-ENSP00000388402"/>
<dbReference type="PeptideAtlas" id="Q07352"/>
<dbReference type="ProteomicsDB" id="58515"/>
<dbReference type="Pumba" id="Q07352"/>
<dbReference type="Antibodypedia" id="37">
    <property type="antibodies" value="368 antibodies from 34 providers"/>
</dbReference>
<dbReference type="DNASU" id="677"/>
<dbReference type="Ensembl" id="ENST00000336440.4">
    <property type="protein sequence ID" value="ENSP00000337386.3"/>
    <property type="gene ID" value="ENSG00000185650.10"/>
</dbReference>
<dbReference type="Ensembl" id="ENST00000439696.3">
    <property type="protein sequence ID" value="ENSP00000388402.2"/>
    <property type="gene ID" value="ENSG00000185650.10"/>
</dbReference>
<dbReference type="GeneID" id="677"/>
<dbReference type="KEGG" id="hsa:677"/>
<dbReference type="MANE-Select" id="ENST00000439696.3">
    <property type="protein sequence ID" value="ENSP00000388402.2"/>
    <property type="RefSeq nucleotide sequence ID" value="NM_004926.4"/>
    <property type="RefSeq protein sequence ID" value="NP_004917.2"/>
</dbReference>
<dbReference type="UCSC" id="uc001xkh.3">
    <property type="organism name" value="human"/>
</dbReference>
<dbReference type="AGR" id="HGNC:1107"/>
<dbReference type="CTD" id="677"/>
<dbReference type="DisGeNET" id="677"/>
<dbReference type="GeneCards" id="ZFP36L1"/>
<dbReference type="HGNC" id="HGNC:1107">
    <property type="gene designation" value="ZFP36L1"/>
</dbReference>
<dbReference type="HPA" id="ENSG00000185650">
    <property type="expression patterns" value="Low tissue specificity"/>
</dbReference>
<dbReference type="MalaCards" id="ZFP36L1"/>
<dbReference type="MIM" id="601064">
    <property type="type" value="gene"/>
</dbReference>
<dbReference type="neXtProt" id="NX_Q07352"/>
<dbReference type="OpenTargets" id="ENSG00000185650"/>
<dbReference type="PharmGKB" id="PA35027"/>
<dbReference type="VEuPathDB" id="HostDB:ENSG00000185650"/>
<dbReference type="eggNOG" id="KOG1677">
    <property type="taxonomic scope" value="Eukaryota"/>
</dbReference>
<dbReference type="GeneTree" id="ENSGT00940000155076"/>
<dbReference type="HOGENOM" id="CLU_033040_1_0_1"/>
<dbReference type="InParanoid" id="Q07352"/>
<dbReference type="OMA" id="YYFRPMS"/>
<dbReference type="OrthoDB" id="410307at2759"/>
<dbReference type="PAN-GO" id="Q07352">
    <property type="GO annotations" value="0 GO annotations based on evolutionary models"/>
</dbReference>
<dbReference type="PhylomeDB" id="Q07352"/>
<dbReference type="TreeFam" id="TF315463"/>
<dbReference type="PathwayCommons" id="Q07352"/>
<dbReference type="Reactome" id="R-HSA-450385">
    <property type="pathway name" value="Butyrate Response Factor 1 (BRF1) binds and destabilizes mRNA"/>
</dbReference>
<dbReference type="SignaLink" id="Q07352"/>
<dbReference type="SIGNOR" id="Q07352"/>
<dbReference type="BioGRID-ORCS" id="677">
    <property type="hits" value="141 hits in 1188 CRISPR screens"/>
</dbReference>
<dbReference type="CD-CODE" id="0AEBFC12">
    <property type="entry name" value="Synthetic Condensate 000361"/>
</dbReference>
<dbReference type="CD-CODE" id="1A0651A8">
    <property type="entry name" value="Synthetic Condensate 000370"/>
</dbReference>
<dbReference type="CD-CODE" id="44FCF654">
    <property type="entry name" value="Synthetic Condensate 000363"/>
</dbReference>
<dbReference type="CD-CODE" id="ACCC2039">
    <property type="entry name" value="TIS granule"/>
</dbReference>
<dbReference type="CD-CODE" id="F85A2E29">
    <property type="entry name" value="IMP1 RNP granule"/>
</dbReference>
<dbReference type="ChiTaRS" id="ZFP36L1">
    <property type="organism name" value="human"/>
</dbReference>
<dbReference type="GeneWiki" id="ZFP36L1"/>
<dbReference type="GenomeRNAi" id="677"/>
<dbReference type="Pharos" id="Q07352">
    <property type="development level" value="Tbio"/>
</dbReference>
<dbReference type="PRO" id="PR:Q07352"/>
<dbReference type="Proteomes" id="UP000005640">
    <property type="component" value="Chromosome 14"/>
</dbReference>
<dbReference type="RNAct" id="Q07352">
    <property type="molecule type" value="protein"/>
</dbReference>
<dbReference type="Bgee" id="ENSG00000185650">
    <property type="expression patterns" value="Expressed in mucosa of paranasal sinus and 202 other cell types or tissues"/>
</dbReference>
<dbReference type="ExpressionAtlas" id="Q07352">
    <property type="expression patterns" value="baseline and differential"/>
</dbReference>
<dbReference type="GO" id="GO:0005737">
    <property type="term" value="C:cytoplasm"/>
    <property type="evidence" value="ECO:0000314"/>
    <property type="project" value="UniProtKB"/>
</dbReference>
<dbReference type="GO" id="GO:0005829">
    <property type="term" value="C:cytosol"/>
    <property type="evidence" value="ECO:0000304"/>
    <property type="project" value="Reactome"/>
</dbReference>
<dbReference type="GO" id="GO:0005634">
    <property type="term" value="C:nucleus"/>
    <property type="evidence" value="ECO:0000314"/>
    <property type="project" value="UniProtKB"/>
</dbReference>
<dbReference type="GO" id="GO:0000932">
    <property type="term" value="C:P-body"/>
    <property type="evidence" value="ECO:0000314"/>
    <property type="project" value="UniProtKB"/>
</dbReference>
<dbReference type="GO" id="GO:1990904">
    <property type="term" value="C:ribonucleoprotein complex"/>
    <property type="evidence" value="ECO:0000314"/>
    <property type="project" value="UniProtKB"/>
</dbReference>
<dbReference type="GO" id="GO:0071889">
    <property type="term" value="F:14-3-3 protein binding"/>
    <property type="evidence" value="ECO:0000314"/>
    <property type="project" value="UniProtKB"/>
</dbReference>
<dbReference type="GO" id="GO:0003677">
    <property type="term" value="F:DNA binding"/>
    <property type="evidence" value="ECO:0007669"/>
    <property type="project" value="UniProtKB-KW"/>
</dbReference>
<dbReference type="GO" id="GO:0035925">
    <property type="term" value="F:mRNA 3'-UTR AU-rich region binding"/>
    <property type="evidence" value="ECO:0000314"/>
    <property type="project" value="UniProtKB"/>
</dbReference>
<dbReference type="GO" id="GO:0003729">
    <property type="term" value="F:mRNA binding"/>
    <property type="evidence" value="ECO:0000314"/>
    <property type="project" value="MGI"/>
</dbReference>
<dbReference type="GO" id="GO:0003723">
    <property type="term" value="F:RNA binding"/>
    <property type="evidence" value="ECO:0007005"/>
    <property type="project" value="UniProtKB"/>
</dbReference>
<dbReference type="GO" id="GO:0008270">
    <property type="term" value="F:zinc ion binding"/>
    <property type="evidence" value="ECO:0007669"/>
    <property type="project" value="UniProtKB-KW"/>
</dbReference>
<dbReference type="GO" id="GO:0061158">
    <property type="term" value="P:3'-UTR-mediated mRNA destabilization"/>
    <property type="evidence" value="ECO:0000314"/>
    <property type="project" value="UniProtKB"/>
</dbReference>
<dbReference type="GO" id="GO:0006915">
    <property type="term" value="P:apoptotic process"/>
    <property type="evidence" value="ECO:0007669"/>
    <property type="project" value="Ensembl"/>
</dbReference>
<dbReference type="GO" id="GO:0008283">
    <property type="term" value="P:cell population proliferation"/>
    <property type="evidence" value="ECO:0007669"/>
    <property type="project" value="Ensembl"/>
</dbReference>
<dbReference type="GO" id="GO:0071320">
    <property type="term" value="P:cellular response to cAMP"/>
    <property type="evidence" value="ECO:0000314"/>
    <property type="project" value="UniProtKB"/>
</dbReference>
<dbReference type="GO" id="GO:0071364">
    <property type="term" value="P:cellular response to epidermal growth factor stimulus"/>
    <property type="evidence" value="ECO:0000314"/>
    <property type="project" value="UniProtKB"/>
</dbReference>
<dbReference type="GO" id="GO:0044344">
    <property type="term" value="P:cellular response to fibroblast growth factor stimulus"/>
    <property type="evidence" value="ECO:0000250"/>
    <property type="project" value="UniProtKB"/>
</dbReference>
<dbReference type="GO" id="GO:0071385">
    <property type="term" value="P:cellular response to glucocorticoid stimulus"/>
    <property type="evidence" value="ECO:0000314"/>
    <property type="project" value="UniProtKB"/>
</dbReference>
<dbReference type="GO" id="GO:0071456">
    <property type="term" value="P:cellular response to hypoxia"/>
    <property type="evidence" value="ECO:0000315"/>
    <property type="project" value="UniProtKB"/>
</dbReference>
<dbReference type="GO" id="GO:0032869">
    <property type="term" value="P:cellular response to insulin stimulus"/>
    <property type="evidence" value="ECO:0000314"/>
    <property type="project" value="UniProtKB"/>
</dbReference>
<dbReference type="GO" id="GO:0071375">
    <property type="term" value="P:cellular response to peptide hormone stimulus"/>
    <property type="evidence" value="ECO:0000314"/>
    <property type="project" value="UniProtKB"/>
</dbReference>
<dbReference type="GO" id="GO:0097403">
    <property type="term" value="P:cellular response to raffinose"/>
    <property type="evidence" value="ECO:0000250"/>
    <property type="project" value="UniProtKB"/>
</dbReference>
<dbReference type="GO" id="GO:0071472">
    <property type="term" value="P:cellular response to salt stress"/>
    <property type="evidence" value="ECO:0000250"/>
    <property type="project" value="UniProtKB"/>
</dbReference>
<dbReference type="GO" id="GO:0071560">
    <property type="term" value="P:cellular response to transforming growth factor beta stimulus"/>
    <property type="evidence" value="ECO:0000314"/>
    <property type="project" value="UniProtKB"/>
</dbReference>
<dbReference type="GO" id="GO:0071356">
    <property type="term" value="P:cellular response to tumor necrosis factor"/>
    <property type="evidence" value="ECO:0000314"/>
    <property type="project" value="UniProtKB"/>
</dbReference>
<dbReference type="GO" id="GO:0060710">
    <property type="term" value="P:chorio-allantoic fusion"/>
    <property type="evidence" value="ECO:0007669"/>
    <property type="project" value="Ensembl"/>
</dbReference>
<dbReference type="GO" id="GO:0070371">
    <property type="term" value="P:ERK1 and ERK2 cascade"/>
    <property type="evidence" value="ECO:0000314"/>
    <property type="project" value="UniProtKB"/>
</dbReference>
<dbReference type="GO" id="GO:0007507">
    <property type="term" value="P:heart development"/>
    <property type="evidence" value="ECO:0007669"/>
    <property type="project" value="Ensembl"/>
</dbReference>
<dbReference type="GO" id="GO:0000165">
    <property type="term" value="P:MAPK cascade"/>
    <property type="evidence" value="ECO:0000314"/>
    <property type="project" value="UniProtKB"/>
</dbReference>
<dbReference type="GO" id="GO:0048382">
    <property type="term" value="P:mesendoderm development"/>
    <property type="evidence" value="ECO:0000250"/>
    <property type="project" value="UniProtKB"/>
</dbReference>
<dbReference type="GO" id="GO:0006397">
    <property type="term" value="P:mRNA processing"/>
    <property type="evidence" value="ECO:0007669"/>
    <property type="project" value="UniProtKB-KW"/>
</dbReference>
<dbReference type="GO" id="GO:0051028">
    <property type="term" value="P:mRNA transport"/>
    <property type="evidence" value="ECO:0000315"/>
    <property type="project" value="UniProtKB"/>
</dbReference>
<dbReference type="GO" id="GO:0035264">
    <property type="term" value="P:multicellular organism growth"/>
    <property type="evidence" value="ECO:0007669"/>
    <property type="project" value="Ensembl"/>
</dbReference>
<dbReference type="GO" id="GO:0045647">
    <property type="term" value="P:negative regulation of erythrocyte differentiation"/>
    <property type="evidence" value="ECO:0000314"/>
    <property type="project" value="UniProtKB"/>
</dbReference>
<dbReference type="GO" id="GO:1901991">
    <property type="term" value="P:negative regulation of mitotic cell cycle phase transition"/>
    <property type="evidence" value="ECO:0000250"/>
    <property type="project" value="UniProtKB"/>
</dbReference>
<dbReference type="GO" id="GO:0021915">
    <property type="term" value="P:neural tube development"/>
    <property type="evidence" value="ECO:0007669"/>
    <property type="project" value="Ensembl"/>
</dbReference>
<dbReference type="GO" id="GO:0000288">
    <property type="term" value="P:nuclear-transcribed mRNA catabolic process, deadenylation-dependent decay"/>
    <property type="evidence" value="ECO:0007669"/>
    <property type="project" value="Ensembl"/>
</dbReference>
<dbReference type="GO" id="GO:0031086">
    <property type="term" value="P:nuclear-transcribed mRNA catabolic process, deadenylation-independent decay"/>
    <property type="evidence" value="ECO:0000250"/>
    <property type="project" value="UniProtKB"/>
</dbReference>
<dbReference type="GO" id="GO:0038066">
    <property type="term" value="P:p38MAPK cascade"/>
    <property type="evidence" value="ECO:0000250"/>
    <property type="project" value="UniProtKB"/>
</dbReference>
<dbReference type="GO" id="GO:0043491">
    <property type="term" value="P:phosphatidylinositol 3-kinase/protein kinase B signal transduction"/>
    <property type="evidence" value="ECO:0000314"/>
    <property type="project" value="UniProtKB"/>
</dbReference>
<dbReference type="GO" id="GO:0045600">
    <property type="term" value="P:positive regulation of fat cell differentiation"/>
    <property type="evidence" value="ECO:0000250"/>
    <property type="project" value="UniProtKB"/>
</dbReference>
<dbReference type="GO" id="GO:1904582">
    <property type="term" value="P:positive regulation of intracellular mRNA localization"/>
    <property type="evidence" value="ECO:0000315"/>
    <property type="project" value="UniProtKB"/>
</dbReference>
<dbReference type="GO" id="GO:0045657">
    <property type="term" value="P:positive regulation of monocyte differentiation"/>
    <property type="evidence" value="ECO:0000314"/>
    <property type="project" value="UniProtKB"/>
</dbReference>
<dbReference type="GO" id="GO:1900153">
    <property type="term" value="P:positive regulation of nuclear-transcribed mRNA catabolic process, deadenylation-dependent decay"/>
    <property type="evidence" value="ECO:0000250"/>
    <property type="project" value="UniProtKB"/>
</dbReference>
<dbReference type="GO" id="GO:0003342">
    <property type="term" value="P:proepicardium development"/>
    <property type="evidence" value="ECO:0007669"/>
    <property type="project" value="Ensembl"/>
</dbReference>
<dbReference type="GO" id="GO:0045577">
    <property type="term" value="P:regulation of B cell differentiation"/>
    <property type="evidence" value="ECO:0000250"/>
    <property type="project" value="UniProtKB"/>
</dbReference>
<dbReference type="GO" id="GO:0010468">
    <property type="term" value="P:regulation of gene expression"/>
    <property type="evidence" value="ECO:0000314"/>
    <property type="project" value="UniProtKB"/>
</dbReference>
<dbReference type="GO" id="GO:1902172">
    <property type="term" value="P:regulation of keratinocyte apoptotic process"/>
    <property type="evidence" value="ECO:0000315"/>
    <property type="project" value="UniProtKB"/>
</dbReference>
<dbReference type="GO" id="GO:0045616">
    <property type="term" value="P:regulation of keratinocyte differentiation"/>
    <property type="evidence" value="ECO:0000315"/>
    <property type="project" value="UniProtKB"/>
</dbReference>
<dbReference type="GO" id="GO:0010837">
    <property type="term" value="P:regulation of keratinocyte proliferation"/>
    <property type="evidence" value="ECO:0000315"/>
    <property type="project" value="UniProtKB"/>
</dbReference>
<dbReference type="GO" id="GO:0031440">
    <property type="term" value="P:regulation of mRNA 3'-end processing"/>
    <property type="evidence" value="ECO:0000314"/>
    <property type="project" value="UniProtKB"/>
</dbReference>
<dbReference type="GO" id="GO:0043488">
    <property type="term" value="P:regulation of mRNA stability"/>
    <property type="evidence" value="ECO:0000314"/>
    <property type="project" value="UniProtKB"/>
</dbReference>
<dbReference type="GO" id="GO:0045661">
    <property type="term" value="P:regulation of myoblast differentiation"/>
    <property type="evidence" value="ECO:0000250"/>
    <property type="project" value="UniProtKB"/>
</dbReference>
<dbReference type="GO" id="GO:0072091">
    <property type="term" value="P:regulation of stem cell proliferation"/>
    <property type="evidence" value="ECO:0000250"/>
    <property type="project" value="UniProtKB"/>
</dbReference>
<dbReference type="GO" id="GO:0006417">
    <property type="term" value="P:regulation of translation"/>
    <property type="evidence" value="ECO:0007669"/>
    <property type="project" value="Ensembl"/>
</dbReference>
<dbReference type="GO" id="GO:0009611">
    <property type="term" value="P:response to wounding"/>
    <property type="evidence" value="ECO:0000314"/>
    <property type="project" value="UniProtKB"/>
</dbReference>
<dbReference type="GO" id="GO:0033077">
    <property type="term" value="P:T cell differentiation in thymus"/>
    <property type="evidence" value="ECO:0000250"/>
    <property type="project" value="UniProtKB"/>
</dbReference>
<dbReference type="GO" id="GO:0001570">
    <property type="term" value="P:vasculogenesis"/>
    <property type="evidence" value="ECO:0007669"/>
    <property type="project" value="Ensembl"/>
</dbReference>
<dbReference type="FunFam" id="4.10.1000.10:FF:000001">
    <property type="entry name" value="zinc finger CCCH domain-containing protein 15-like"/>
    <property type="match status" value="1"/>
</dbReference>
<dbReference type="FunFam" id="4.10.1000.10:FF:000002">
    <property type="entry name" value="Zinc finger protein 36, C3H1 type-like 1"/>
    <property type="match status" value="1"/>
</dbReference>
<dbReference type="Gene3D" id="4.10.1000.10">
    <property type="entry name" value="Zinc finger, CCCH-type"/>
    <property type="match status" value="2"/>
</dbReference>
<dbReference type="InterPro" id="IPR007635">
    <property type="entry name" value="Tis11B_N"/>
</dbReference>
<dbReference type="InterPro" id="IPR045877">
    <property type="entry name" value="ZFP36-like"/>
</dbReference>
<dbReference type="InterPro" id="IPR000571">
    <property type="entry name" value="Znf_CCCH"/>
</dbReference>
<dbReference type="InterPro" id="IPR036855">
    <property type="entry name" value="Znf_CCCH_sf"/>
</dbReference>
<dbReference type="PANTHER" id="PTHR12547">
    <property type="entry name" value="CCCH ZINC FINGER/TIS11-RELATED"/>
    <property type="match status" value="1"/>
</dbReference>
<dbReference type="PANTHER" id="PTHR12547:SF53">
    <property type="entry name" value="MRNA DECAY ACTIVATOR PROTEIN ZFP36L1"/>
    <property type="match status" value="1"/>
</dbReference>
<dbReference type="Pfam" id="PF04553">
    <property type="entry name" value="Tis11B_N"/>
    <property type="match status" value="1"/>
</dbReference>
<dbReference type="Pfam" id="PF00642">
    <property type="entry name" value="zf-CCCH"/>
    <property type="match status" value="2"/>
</dbReference>
<dbReference type="SMART" id="SM00356">
    <property type="entry name" value="ZnF_C3H1"/>
    <property type="match status" value="2"/>
</dbReference>
<dbReference type="SUPFAM" id="SSF90229">
    <property type="entry name" value="CCCH zinc finger"/>
    <property type="match status" value="2"/>
</dbReference>
<dbReference type="PROSITE" id="PS50103">
    <property type="entry name" value="ZF_C3H1"/>
    <property type="match status" value="2"/>
</dbReference>
<accession>Q07352</accession>
<accession>Q13851</accession>
<organism>
    <name type="scientific">Homo sapiens</name>
    <name type="common">Human</name>
    <dbReference type="NCBI Taxonomy" id="9606"/>
    <lineage>
        <taxon>Eukaryota</taxon>
        <taxon>Metazoa</taxon>
        <taxon>Chordata</taxon>
        <taxon>Craniata</taxon>
        <taxon>Vertebrata</taxon>
        <taxon>Euteleostomi</taxon>
        <taxon>Mammalia</taxon>
        <taxon>Eutheria</taxon>
        <taxon>Euarchontoglires</taxon>
        <taxon>Primates</taxon>
        <taxon>Haplorrhini</taxon>
        <taxon>Catarrhini</taxon>
        <taxon>Hominidae</taxon>
        <taxon>Homo</taxon>
    </lineage>
</organism>
<proteinExistence type="evidence at protein level"/>
<comment type="function">
    <text evidence="1 2 6 8 9 10 11 12 13 14 15 17 18 19 20 21 22 23">Zinc-finger RNA-binding protein that destabilizes several cytoplasmic AU-rich element (ARE)-containing mRNA transcripts by promoting their poly(A) tail removal or deadenylation, and hence provide a mechanism for attenuating protein synthesis (PubMed:12198173, PubMed:15467755, PubMed:15538381, PubMed:17030608, PubMed:19179481, PubMed:20702587, PubMed:24700863, PubMed:25014217, PubMed:25106868, PubMed:26542173). Acts as a 3'-untranslated region (UTR) ARE mRNA-binding adapter protein to communicate signaling events to the mRNA decay machinery (PubMed:15687258). Functions by recruiting the CCR4-NOT deadenylase complex and components of the cytoplasmic RNA decay machinery to the bound ARE-containing mRNAs, and hence promotes ARE-mediated mRNA deadenylation and decay processes (PubMed:15687258, PubMed:18326031, PubMed:25106868). Also induces the degradation of ARE-containing mRNAs even in absence of poly(A) tail (By similarity). Binds to 3'-UTR ARE of numerous mRNAs (PubMed:12198173, PubMed:15467755, PubMed:15538381, PubMed:17030608, PubMed:19179481, PubMed:20702587, PubMed:24700863, PubMed:25014217, PubMed:25106868, PubMed:26542173). Positively regulates early adipogenesis by promoting ARE-mediated mRNA decay of immediate early genes (IEGs) (By similarity). Promotes ARE-mediated mRNA decay of mineralocorticoid receptor NR3C2 mRNA in response to hypertonic stress (PubMed:24700863). Negatively regulates hematopoietic/erythroid cell differentiation by promoting ARE-mediated mRNA decay of the transcription factor STAT5B mRNA (PubMed:20702587). Positively regulates monocyte/macrophage cell differentiation by promoting ARE-mediated mRNA decay of the cyclin-dependent kinase CDK6 mRNA (PubMed:26542173). Promotes degradation of ARE-containing pluripotency-associated mRNAs in embryonic stem cells (ESCs), such as NANOG, through a fibroblast growth factor (FGF)-induced MAPK-dependent signaling pathway, and hence attenuates ESC self-renewal and positively regulates mesendoderm differentiation (By similarity). May play a role in mediating pro-apoptotic effects in malignant B-cells by promoting ARE-mediated mRNA decay of BCL2 mRNA (PubMed:25014217). In association with ZFP36L2 maintains quiescence on developing B lymphocytes by promoting ARE-mediated decay of several mRNAs encoding cell cycle regulators that help B cells progress through the cell cycle, and hence ensuring accurate variable-diversity-joining (VDJ) recombination and functional immune cell formation (By similarity). Together with ZFP36L2 is also necessary for thymocyte development and prevention of T-cell acute lymphoblastic leukemia (T-ALL) transformation by promoting ARE-mediated mRNA decay of the oncogenic transcription factor NOTCH1 mRNA (By similarity). Participates in the delivery of target ARE-mRNAs to processing bodies (PBs) (PubMed:17369404). In addition to its cytosolic mRNA-decay function, plays a role in the regulation of nuclear mRNA 3'-end processing; modulates mRNA 3'-end maturation efficiency of the DLL4 mRNA through binding with an ARE embedded in a weak noncanonical polyadenylation (poly(A)) signal in endothelial cells (PubMed:21832157). Also involved in the regulation of stress granule (SG) and P-body (PB) formation and fusion (PubMed:15967811). Plays a role in vasculogenesis and endocardial development (By similarity). Plays a role in the regulation of keratinocyte proliferation, differentiation and apoptosis (PubMed:27182009). Plays a role in myoblast cell differentiation (By similarity).</text>
</comment>
<comment type="subunit">
    <text evidence="2 6 8 9 10 11 12 13 14 15 17 18 19 20 21 22 23">Associates with the cytoplasmic CCR4-NOT deadenylase and RNA exosome complexes to trigger ARE-containing mRNA deadenylation and decay processes (PubMed:15687258, PubMed:18326031, PubMed:25106868). Interacts with CNOT1 (PubMed:25106868). Interacts (via N-terminus) with CNOT6 (PubMed:15687258, PubMed:18326031). Interacts with CNOT7; this interaction is inhibited in response to phorbol 12-myristate 13-acetate (PMA) treatment in a p38 MAPK-dependent manner (PubMed:25106868). Interacts with DCP1A (PubMed:15687258). Interacts (via N-terminus) with DCP2 (PubMed:15687258, PubMed:18326031). Interacts (via N-terminus) with EXOSC2 (PubMed:15687258, PubMed:18326031). Interacts with XRN1 (PubMed:15687258). Interacts (via phosphorylated form) with YWHAB; this interaction occurs in a protein kinase AKT1-dependent manner (PubMed:15538381, PubMed:17030608, PubMed:18326031). Interacts (via phosphorylated form) with YWHAZ; this interaction occurs in a p38 MAPK- and AKT-signaling pathways (By similarity).</text>
</comment>
<comment type="interaction">
    <interactant intactId="EBI-721823">
        <id>Q07352</id>
    </interactant>
    <interactant intactId="EBI-73946">
        <id>Q16539</id>
        <label>MAPK14</label>
    </interactant>
    <organismsDiffer>false</organismsDiffer>
    <experiments>2</experiments>
</comment>
<comment type="interaction">
    <interactant intactId="EBI-721823">
        <id>Q07352</id>
    </interactant>
    <interactant intactId="EBI-359832">
        <id>P61981</id>
        <label>YWHAG</label>
    </interactant>
    <organismsDiffer>false</organismsDiffer>
    <experiments>4</experiments>
</comment>
<comment type="subcellular location">
    <subcellularLocation>
        <location evidence="6">Nucleus</location>
    </subcellularLocation>
    <subcellularLocation>
        <location evidence="6">Cytoplasm</location>
    </subcellularLocation>
    <subcellularLocation>
        <location evidence="11">Cytoplasmic granule</location>
    </subcellularLocation>
    <subcellularLocation>
        <location evidence="11 13">Cytoplasm</location>
        <location evidence="11 13">P-body</location>
    </subcellularLocation>
    <text evidence="2 11 13">Shuttles between the nucleus and the cytoplasm in a XPO1/CRM1-dependent manner (By similarity). Component of cytoplasmic stress granules (PubMed:15967811). Localizes in processing bodies (PBs) (PubMed:17369404).</text>
</comment>
<comment type="tissue specificity">
    <text evidence="7 23">Expressed mainly in the basal epidermal layer, weakly in the suprabasal epidermal layers (PubMed:27182009). Expressed in epidermal keratinocytes (at protein level) (PubMed:27182009). Expressed in osteoblasts (PubMed:15465005).</text>
</comment>
<comment type="induction">
    <text evidence="5 7 15 16 18 22 23">Down-regulated under hypoxic conditions in endothelial cells (at protein level) (PubMed:21832157). Up-regulated by growth factor (TGF-beta), cytokines, tumor necrosis factor (TNF-alpha) and epidermal growth factor (EGF) in keratinocytes (PubMed:20166898). Up-regulated also by glucocorticoid dexamethasone in keratinocytes (PubMed:20166898). Up-regulated in keratinocytes in response to wounding in a p38 MAPK-dependent manner (PubMed:20166898, PubMed:27182009). Up-regulated by the parathyroid hormone (PTH) in osteoblast-like cells in a cAMP/PKA-dependent manner (PubMed:15465005, PubMed:19179481). Up-regulated in response to adrenocorticotropic hormone (ACTH) (PubMed:19179481). Up-regulated during monocyte/macrophage differentiation in response to phorbol ester 12-O-tetradecanoylphorbol-13-acetate (TPA) (PubMed:26542173). Down-regulated by butyrate in colorectal cancer cells (PubMed:10367403).</text>
</comment>
<comment type="PTM">
    <text evidence="2 9 12 14 15 21">Phosphorylated (PubMed:19179481). Phosphorylated by RPS6KA1 at Ser-334 upon phorbol 12-myristate 13-acetate (PMA) treatment; this phosphorylation results in dissociation of the CCR4-NOT deadenylase complex and induces p38 MAPK-mediated stabilization of the low-density lipoprotein receptor LDLR mRNA (PubMed:25106868). Phosphorylated by protein kinase AKT1 at Ser-92 and Ser-203 in response to insulin; these phosphorylations stabilize ZFP36L1, increase the association with 14-3-3 proteins and mediate ARE-containing mRNA stabilization (PubMed:15538381, PubMed:17030608). AKT1-mediated phosphorylation at Ser-92 does not impair ARE-containing RNA-binding (PubMed:15538381). Phosphorylated at Ser-54, Ser-92 and Ser-203 by MAPKAPK2; these phosphorylations increase the association with 14-3-3 proteins and mediate ARE-containing mRNA stabilization in a protein kinase AKT1-independent manner (PubMed:18326031). MAPKAPK2-mediated phosphorylations at Ser-54, Ser-92 and Ser-203 do not impair ARE-containing RNA-binding (PubMed:18326031). Phosphorylations increase the association with 14-3-3 proteins and mediate ARE-containing mRNA stabilization during early adipogenesis in a p38 MAPK- and AKT-dependent manner (By similarity).</text>
</comment>
<comment type="PTM">
    <text evidence="12">Ubiquitinated. Ubiquitination leads to proteasomal degradation, a process inhibited by phosphorylations at Ser-90, Ser-92 and Ser-203 (PubMed:17030608).</text>
</comment>
<comment type="online information" name="Atlas of Genetics and Cytogenetics in Oncology and Haematology">
    <link uri="https://atlasgeneticsoncology.org/gene/42866/ZFP36L1"/>
</comment>
<gene>
    <name evidence="29" type="primary">ZFP36L1</name>
    <name evidence="27" type="synonym">BERG36</name>
    <name evidence="24 25" type="synonym">BRF1</name>
    <name evidence="26" type="synonym">ERF1</name>
    <name type="synonym">RNF162B</name>
    <name evidence="2" type="synonym">TIS11B</name>
</gene>
<keyword id="KW-0002">3D-structure</keyword>
<keyword id="KW-0963">Cytoplasm</keyword>
<keyword id="KW-0217">Developmental protein</keyword>
<keyword id="KW-0238">DNA-binding</keyword>
<keyword id="KW-0479">Metal-binding</keyword>
<keyword id="KW-0507">mRNA processing</keyword>
<keyword id="KW-0509">mRNA transport</keyword>
<keyword id="KW-0539">Nucleus</keyword>
<keyword id="KW-0597">Phosphoprotein</keyword>
<keyword id="KW-1267">Proteomics identification</keyword>
<keyword id="KW-1185">Reference proteome</keyword>
<keyword id="KW-0677">Repeat</keyword>
<keyword id="KW-0687">Ribonucleoprotein</keyword>
<keyword id="KW-0694">RNA-binding</keyword>
<keyword id="KW-0813">Transport</keyword>
<keyword id="KW-0832">Ubl conjugation</keyword>
<keyword id="KW-0862">Zinc</keyword>
<keyword id="KW-0863">Zinc-finger</keyword>
<reference key="1">
    <citation type="journal article" date="1993" name="Nucleic Acids Res.">
        <title>Coding sequence of ERF-1, the human homologue of Tis11b/cMG1, members of the Tis11 family of early response genes.</title>
        <authorList>
            <person name="Barnard R.C."/>
            <person name="Pascall J.C."/>
            <person name="Brown K.D."/>
            <person name="McKay I.A."/>
            <person name="Williams N.S."/>
            <person name="Bustin S.A."/>
        </authorList>
    </citation>
    <scope>NUCLEOTIDE SEQUENCE [MRNA]</scope>
</reference>
<reference key="2">
    <citation type="journal article" date="1994" name="DNA Cell Biol.">
        <title>Cloning and characterization of ERF-1, a human member of the Tis11 family of early-response genes.</title>
        <authorList>
            <person name="Bustin S.A."/>
            <person name="Nie X.F."/>
            <person name="Barnard R.C."/>
            <person name="Kumar V."/>
            <person name="Pascall J.C."/>
            <person name="Brown K.D."/>
            <person name="Leigh I.M."/>
            <person name="Williams N.S."/>
            <person name="McKay L.A."/>
        </authorList>
    </citation>
    <scope>NUCLEOTIDE SEQUENCE [MRNA]</scope>
</reference>
<reference key="3">
    <citation type="journal article" date="1996" name="Eur. J. Immunol.">
        <title>Distinct mechanisms for rescue from apoptosis in Ramos human B cells by signaling through CD40 and interleukin-4 receptor: role for inhibition of an early response gene, Berg36.</title>
        <authorList>
            <person name="Ning Z.Q."/>
            <person name="Norton J.D."/>
            <person name="Li J."/>
            <person name="Murphy J.J."/>
        </authorList>
    </citation>
    <scope>NUCLEOTIDE SEQUENCE [MRNA]</scope>
</reference>
<reference key="4">
    <citation type="submission" date="2004-10" db="EMBL/GenBank/DDBJ databases">
        <title>Cloning of human full-length CDSs in BD Creator(TM) system donor vector.</title>
        <authorList>
            <person name="Kalnine N."/>
            <person name="Chen X."/>
            <person name="Rolfs A."/>
            <person name="Halleck A."/>
            <person name="Hines L."/>
            <person name="Eisenstein S."/>
            <person name="Koundinya M."/>
            <person name="Raphael J."/>
            <person name="Moreira D."/>
            <person name="Kelley T."/>
            <person name="LaBaer J."/>
            <person name="Lin Y."/>
            <person name="Phelan M."/>
            <person name="Farmer A."/>
        </authorList>
    </citation>
    <scope>NUCLEOTIDE SEQUENCE [LARGE SCALE MRNA]</scope>
</reference>
<reference key="5">
    <citation type="journal article" date="2004" name="Genome Res.">
        <title>The status, quality, and expansion of the NIH full-length cDNA project: the Mammalian Gene Collection (MGC).</title>
        <authorList>
            <consortium name="The MGC Project Team"/>
        </authorList>
    </citation>
    <scope>NUCLEOTIDE SEQUENCE [LARGE SCALE MRNA]</scope>
    <source>
        <tissue>Ovary</tissue>
    </source>
</reference>
<reference key="6">
    <citation type="journal article" date="1998" name="Br. J. Biomed. Sci.">
        <title>Differential effects of sodium butyrate on the transcription of the human TIS11 family of early-response genes in colorectal cancer cells.</title>
        <authorList>
            <person name="Maclean K.N."/>
            <person name="McKay I.A."/>
            <person name="Bustin S.A."/>
        </authorList>
    </citation>
    <scope>INDUCTION</scope>
</reference>
<reference key="7">
    <citation type="journal article" date="2002" name="EMBO J.">
        <title>Functional cloning of BRF1, a regulator of ARE-dependent mRNA turnover.</title>
        <authorList>
            <person name="Stoecklin G."/>
            <person name="Colombi M."/>
            <person name="Raineri I."/>
            <person name="Leuenberger S."/>
            <person name="Mallaun M."/>
            <person name="Schmidlin M."/>
            <person name="Gross B."/>
            <person name="Lu M."/>
            <person name="Kitamura T."/>
            <person name="Moroni C."/>
        </authorList>
    </citation>
    <scope>FUNCTION</scope>
    <scope>RNA-BINDING</scope>
    <scope>SUBCELLULAR LOCATION</scope>
    <scope>MUTAGENESIS OF CYS-120 AND CYS-158</scope>
</reference>
<reference key="8">
    <citation type="journal article" date="2004" name="Biochem. Biophys. Res. Commun.">
        <title>Butyrate response factor 1 is regulated by parathyroid hormone and bone morphogenetic protein-2 in osteoblastic cells.</title>
        <authorList>
            <person name="Reppe S."/>
            <person name="Olstad O.K."/>
            <person name="Rian E."/>
            <person name="Gautvik V.T."/>
            <person name="Gautvik K.M."/>
            <person name="Jemtland R."/>
        </authorList>
    </citation>
    <scope>TISSUE SPECIFICITY</scope>
    <scope>INDUCTION</scope>
</reference>
<reference key="9">
    <citation type="journal article" date="2004" name="EMBO J.">
        <title>The ARE-dependent mRNA-destabilizing activity of BRF1 is regulated by protein kinase B.</title>
        <authorList>
            <person name="Schmidlin M."/>
            <person name="Lu M."/>
            <person name="Leuenberger S.A."/>
            <person name="Stoecklin G."/>
            <person name="Mallaun M."/>
            <person name="Gross B."/>
            <person name="Gherzi R."/>
            <person name="Hess D."/>
            <person name="Hemmings B.A."/>
            <person name="Moroni C."/>
        </authorList>
    </citation>
    <scope>FUNCTION</scope>
    <scope>RNA-BINDING</scope>
    <scope>INTERACTION WITH YWHAB</scope>
    <scope>PHOSPHORYLATION AT SER-90 AND SER-92</scope>
    <scope>MUTAGENESIS OF SER-90 AND SER-92</scope>
</reference>
<reference key="10">
    <citation type="journal article" date="2004" name="Oncogene">
        <title>Destabilization of vascular endothelial growth factor mRNA by the zinc-finger protein TIS11b.</title>
        <authorList>
            <person name="Ciais D."/>
            <person name="Cherradi N."/>
            <person name="Bailly S."/>
            <person name="Grenier E."/>
            <person name="Berra E."/>
            <person name="Pouyssegur J."/>
            <person name="Lamarre J."/>
            <person name="Feige J.J."/>
        </authorList>
    </citation>
    <scope>FUNCTION</scope>
    <scope>RNA-BINDING</scope>
</reference>
<reference key="11">
    <citation type="journal article" date="2005" name="Genes Dev.">
        <title>Recruitment and activation of mRNA decay enzymes by two ARE-mediated decay activation domains in the proteins TTP and BRF-1.</title>
        <authorList>
            <person name="Lykke-Andersen J."/>
            <person name="Wagner E."/>
        </authorList>
    </citation>
    <scope>FUNCTION</scope>
    <scope>IDENTIFICATION IN A MRNA DECAY ACTIVATION COMPLEX</scope>
    <scope>INTERACTION WITH CNOT6; DCP1A; DCP2; EXOSC2 AND XRN1</scope>
</reference>
<reference key="12">
    <citation type="journal article" date="2005" name="J. Cell Biol.">
        <title>Stress granules and processing bodies are dynamically linked sites of mRNP remodeling.</title>
        <authorList>
            <person name="Kedersha N."/>
            <person name="Stoecklin G."/>
            <person name="Ayodele M."/>
            <person name="Yacono P."/>
            <person name="Lykke-Andersen J."/>
            <person name="Fritzler M.J."/>
            <person name="Scheuner D."/>
            <person name="Kaufman R.J."/>
            <person name="Golan D.E."/>
            <person name="Anderson P."/>
        </authorList>
    </citation>
    <scope>FUNCTION</scope>
    <scope>SUBCELLULAR LOCATION</scope>
</reference>
<reference key="13">
    <citation type="journal article" date="2006" name="Mol. Cell. Biol.">
        <title>BRF1 protein turnover and mRNA decay activity are regulated by protein kinase B at the same phosphorylation sites.</title>
        <authorList>
            <person name="Benjamin D."/>
            <person name="Schmidlin M."/>
            <person name="Min L."/>
            <person name="Gross B."/>
            <person name="Moroni C."/>
        </authorList>
    </citation>
    <scope>FUNCTION</scope>
    <scope>RNA-BINDING</scope>
    <scope>INTERACTION WITH YWHAB</scope>
    <scope>PHOSPHORYLATION AT SER-203</scope>
    <scope>UBIQUITINATION</scope>
    <scope>MUTAGENESIS OF SER-92 AND SER-203</scope>
</reference>
<reference key="14">
    <citation type="journal article" date="2007" name="Genes Dev.">
        <title>TTP and BRF proteins nucleate processing body formation to silence mRNAs with AU-rich elements.</title>
        <authorList>
            <person name="Franks T.M."/>
            <person name="Lykke-Andersen J."/>
        </authorList>
    </citation>
    <scope>FUNCTION</scope>
    <scope>SUBCELLULAR LOCATION</scope>
</reference>
<reference key="15">
    <citation type="journal article" date="2008" name="RNA">
        <title>The AU-rich element mRNA decay-promoting activity of BRF1 is regulated by mitogen-activated protein kinase-activated protein kinase 2.</title>
        <authorList>
            <person name="Maitra S."/>
            <person name="Chou C.F."/>
            <person name="Luber C.A."/>
            <person name="Lee K.Y."/>
            <person name="Mann M."/>
            <person name="Chen C.Y."/>
        </authorList>
    </citation>
    <scope>FUNCTION</scope>
    <scope>INTERACTION WITH CNOT6; DCP2; EXOSC2 AND YWHAB</scope>
    <scope>PHOSPHORYLATION AT SER-54; SER-92 AND SER-203</scope>
    <scope>MUTAGENESIS OF SER-54; SER-92 AND SER-203</scope>
</reference>
<reference key="16">
    <citation type="journal article" date="2009" name="Mol. Endocrinol.">
        <title>cAMP-dependent posttranscriptional regulation of steroidogenic acute regulatory (STAR) protein by the zinc finger protein ZFP36L1/TIS11b.</title>
        <authorList>
            <person name="Duan H."/>
            <person name="Cherradi N."/>
            <person name="Feige J.J."/>
            <person name="Jefcoate C."/>
        </authorList>
    </citation>
    <scope>FUNCTION</scope>
    <scope>RNA-BINDING</scope>
    <scope>PHOSPHORYLATION</scope>
    <scope>INDUCTION</scope>
</reference>
<reference key="17">
    <citation type="journal article" date="2010" name="Growth Factors">
        <title>ZFP36L1 is regulated by growth factors and cytokines in keratinocytes and influences their VEGF production.</title>
        <authorList>
            <person name="Hacker C."/>
            <person name="Valchanova R."/>
            <person name="Adams S."/>
            <person name="Munz B."/>
        </authorList>
    </citation>
    <scope>INDUCTION</scope>
</reference>
<reference key="18">
    <citation type="journal article" date="2010" name="Mol. Biol. Cell">
        <title>ZFP36L1 negatively regulates erythroid differentiation of CD34+ hematopoietic stem cells by interfering with the Stat5b pathway.</title>
        <authorList>
            <person name="Vignudelli T."/>
            <person name="Selmi T."/>
            <person name="Martello A."/>
            <person name="Parenti S."/>
            <person name="Grande A."/>
            <person name="Gemelli C."/>
            <person name="Zanocco-Marani T."/>
            <person name="Ferrari S."/>
        </authorList>
    </citation>
    <scope>FUNCTION</scope>
    <scope>RNA-BINDING</scope>
</reference>
<reference key="19">
    <citation type="journal article" date="2011" name="Mol. Biol. Cell">
        <title>A novel function of Tis11b/BRF1 as a regulator of Dll4 mRNA 3'-end processing.</title>
        <authorList>
            <person name="Desroches-Castan A."/>
            <person name="Cherradi N."/>
            <person name="Feige J.J."/>
            <person name="Ciais D."/>
        </authorList>
    </citation>
    <scope>FUNCTION</scope>
    <scope>RNA-BINDING</scope>
    <scope>INDUCTION</scope>
</reference>
<reference key="20">
    <citation type="journal article" date="2011" name="Sci. Signal.">
        <title>System-wide temporal characterization of the proteome and phosphoproteome of human embryonic stem cell differentiation.</title>
        <authorList>
            <person name="Rigbolt K.T."/>
            <person name="Prokhorova T.A."/>
            <person name="Akimov V."/>
            <person name="Henningsen J."/>
            <person name="Johansen P.T."/>
            <person name="Kratchmarova I."/>
            <person name="Kassem M."/>
            <person name="Mann M."/>
            <person name="Olsen J.V."/>
            <person name="Blagoev B."/>
        </authorList>
    </citation>
    <scope>PHOSPHORYLATION [LARGE SCALE ANALYSIS] AT SER-54</scope>
    <scope>IDENTIFICATION BY MASS SPECTROMETRY [LARGE SCALE ANALYSIS]</scope>
</reference>
<reference key="21">
    <citation type="journal article" date="2013" name="J. Proteome Res.">
        <title>Toward a comprehensive characterization of a human cancer cell phosphoproteome.</title>
        <authorList>
            <person name="Zhou H."/>
            <person name="Di Palma S."/>
            <person name="Preisinger C."/>
            <person name="Peng M."/>
            <person name="Polat A.N."/>
            <person name="Heck A.J."/>
            <person name="Mohammed S."/>
        </authorList>
    </citation>
    <scope>PHOSPHORYLATION [LARGE SCALE ANALYSIS] AT SER-54</scope>
    <scope>IDENTIFICATION BY MASS SPECTROMETRY [LARGE SCALE ANALYSIS]</scope>
    <source>
        <tissue>Cervix carcinoma</tissue>
        <tissue>Erythroleukemia</tissue>
    </source>
</reference>
<reference key="22">
    <citation type="journal article" date="2014" name="J. Am. Soc. Nephrol.">
        <title>Hypertonicity compromises renal mineralocorticoid receptor signaling through Tis11b-mediated post-transcriptional control.</title>
        <authorList>
            <person name="Viengchareun S."/>
            <person name="Lema I."/>
            <person name="Lamribet K."/>
            <person name="Keo V."/>
            <person name="Blanchard A."/>
            <person name="Cherradi N."/>
            <person name="Lombes M."/>
        </authorList>
    </citation>
    <scope>FUNCTION</scope>
    <scope>RNA-BINDING</scope>
    <scope>MUTAGENESIS OF CYS-120 AND CYS-158</scope>
</reference>
<reference key="23">
    <citation type="journal article" date="2014" name="J. Proteomics">
        <title>An enzyme assisted RP-RPLC approach for in-depth analysis of human liver phosphoproteome.</title>
        <authorList>
            <person name="Bian Y."/>
            <person name="Song C."/>
            <person name="Cheng K."/>
            <person name="Dong M."/>
            <person name="Wang F."/>
            <person name="Huang J."/>
            <person name="Sun D."/>
            <person name="Wang L."/>
            <person name="Ye M."/>
            <person name="Zou H."/>
        </authorList>
    </citation>
    <scope>PHOSPHORYLATION [LARGE SCALE ANALYSIS] AT SER-54 AND SER-318</scope>
    <scope>IDENTIFICATION BY MASS SPECTROMETRY [LARGE SCALE ANALYSIS]</scope>
    <source>
        <tissue>Liver</tissue>
    </source>
</reference>
<reference key="24">
    <citation type="journal article" date="2014" name="Nucleic Acids Res.">
        <title>ZFP36L1 and ZFP36L2 control LDLR mRNA stability via the ERK-RSK pathway.</title>
        <authorList>
            <person name="Adachi S."/>
            <person name="Homoto M."/>
            <person name="Tanaka R."/>
            <person name="Hioki Y."/>
            <person name="Murakami H."/>
            <person name="Suga H."/>
            <person name="Matsumoto M."/>
            <person name="Nakayama K.I."/>
            <person name="Hatta T."/>
            <person name="Iemura S."/>
            <person name="Natsume T."/>
        </authorList>
    </citation>
    <scope>FUNCTION</scope>
    <scope>RNA-BINDING</scope>
    <scope>INTERACTION WITH CNOT1 AND CNOT7</scope>
    <scope>PHOSPHORYLATION AT SER-334</scope>
    <scope>MUTAGENESIS OF SER-334 AND SER-336</scope>
    <scope>IDENTIFICATION BY MASS SPECTROMETRY</scope>
</reference>
<reference key="25">
    <citation type="journal article" date="2014" name="PLoS ONE">
        <title>Post-transcriptional regulation of BCL2 mRNA by the RNA-binding protein ZFP36L1 in malignant B cells.</title>
        <authorList>
            <person name="Zekavati A."/>
            <person name="Nasir A."/>
            <person name="Alcaraz A."/>
            <person name="Aldrovandi M."/>
            <person name="Marsh P."/>
            <person name="Norton J.D."/>
            <person name="Murphy J.J."/>
        </authorList>
    </citation>
    <scope>FUNCTION</scope>
    <scope>RNA-BINDING</scope>
</reference>
<reference key="26">
    <citation type="journal article" date="2015" name="Sci. Rep.">
        <title>ZFP36L1 promotes monocyte/macrophage differentiation by repressing CDK6.</title>
        <authorList>
            <person name="Chen M.T."/>
            <person name="Dong L."/>
            <person name="Zhang X.H."/>
            <person name="Yin X.L."/>
            <person name="Ning H.M."/>
            <person name="Shen C."/>
            <person name="Su R."/>
            <person name="Li F."/>
            <person name="Song L."/>
            <person name="Ma Y.N."/>
            <person name="Wang F."/>
            <person name="Zhao H.L."/>
            <person name="Yu J."/>
            <person name="Zhang J.W."/>
        </authorList>
    </citation>
    <scope>FUNCTION</scope>
    <scope>RNA-BINDING</scope>
    <scope>INDUCTION</scope>
</reference>
<reference key="27">
    <citation type="journal article" date="2016" name="Eur. J. Cell Biol.">
        <title>Functional analysis of ZFP36 proteins in keratinocytes.</title>
        <authorList>
            <person name="Prenzler F."/>
            <person name="Fragasso A."/>
            <person name="Schmitt A."/>
            <person name="Munz B."/>
        </authorList>
    </citation>
    <scope>FUNCTION</scope>
    <scope>TISSUE SPECIFICITY</scope>
    <scope>INDUCTION</scope>
</reference>
<reference key="28">
    <citation type="journal article" date="2005" name="J. Mol. Biol.">
        <title>Thermodynamic and structural equivalence of two HLA-B27 subtypes complexed with a self-peptide.</title>
        <authorList>
            <person name="Hulsmeyer M."/>
            <person name="Welfle K."/>
            <person name="Pohlmann T."/>
            <person name="Misselwitz R."/>
            <person name="Alexiev U."/>
            <person name="Welfle H."/>
            <person name="Saenger W."/>
            <person name="Uchanska-Ziegler B."/>
            <person name="Ziegler A."/>
        </authorList>
    </citation>
    <scope>X-RAY CRYSTALLOGRAPHY (2.1 ANGSTROMS) OF 325-333 IN COMPLEX WITH MAJOR HISTOCOMPATIBILITY COMPLEX HLA</scope>
</reference>
<feature type="chain" id="PRO_0000089167" description="mRNA decay activator protein ZFP36L1">
    <location>
        <begin position="1"/>
        <end position="338"/>
    </location>
</feature>
<feature type="zinc finger region" description="C3H1-type 1" evidence="3">
    <location>
        <begin position="114"/>
        <end position="142"/>
    </location>
</feature>
<feature type="zinc finger region" description="C3H1-type 2" evidence="3">
    <location>
        <begin position="152"/>
        <end position="180"/>
    </location>
</feature>
<feature type="region of interest" description="Necessary and sufficient for the association with mRNA decay enzymes and mRNA decay activation" evidence="10">
    <location>
        <begin position="1"/>
        <end position="111"/>
    </location>
</feature>
<feature type="region of interest" description="Disordered" evidence="4">
    <location>
        <begin position="93"/>
        <end position="113"/>
    </location>
</feature>
<feature type="region of interest" description="Necessary for mRNA decay activation" evidence="10">
    <location>
        <begin position="185"/>
        <end position="338"/>
    </location>
</feature>
<feature type="region of interest" description="Disordered" evidence="4">
    <location>
        <begin position="273"/>
        <end position="338"/>
    </location>
</feature>
<feature type="compositionally biased region" description="Low complexity" evidence="4">
    <location>
        <begin position="296"/>
        <end position="318"/>
    </location>
</feature>
<feature type="modified residue" description="Phosphoserine; by MAPKAPK2" evidence="14 30 31 32">
    <location>
        <position position="54"/>
    </location>
</feature>
<feature type="modified residue" description="Phosphoserine; by PKB/AKT1" evidence="9">
    <location>
        <position position="90"/>
    </location>
</feature>
<feature type="modified residue" description="Phosphoserine; by PKB/AKT1 and MAPKAPK2" evidence="9 14">
    <location>
        <position position="92"/>
    </location>
</feature>
<feature type="modified residue" description="Phosphoserine; by PKB/AKT1 and MAPKAPK2" evidence="12 14">
    <location>
        <position position="203"/>
    </location>
</feature>
<feature type="modified residue" description="Phosphoserine" evidence="32">
    <location>
        <position position="318"/>
    </location>
</feature>
<feature type="modified residue" description="Phosphoserine; by RPS6KA1" evidence="21">
    <location>
        <position position="334"/>
    </location>
</feature>
<feature type="mutagenesis site" description="Inhibits MAPKAPK2-mediated ARE-containing mRNA stabilization; when associated with A-92 and A-203." evidence="14">
    <original>S</original>
    <variation>A</variation>
    <location>
        <position position="54"/>
    </location>
</feature>
<feature type="mutagenesis site" description="Inhibits interaction with 14-3-3 proteins and AKT1-mediated ARE-containing mRNA stabilization, but does not affect ARE binding; when associated with A-92." evidence="9">
    <original>S</original>
    <variation>A</variation>
    <location>
        <position position="90"/>
    </location>
</feature>
<feature type="mutagenesis site" description="Inhibits MAPKAPK2-mediated ARE-containing mRNA stabilization; when associated with A-54 and A-203. Inhibits interaction with 14-3-3 proteins and AKT1-mediated ARE-containing mRNA stabilization; when associated with A-203. Inhibits interaction with 14-3-3 proteins and AKT1-mediated ARE-containing mRNA stabilization, but does not affect ARE binding; when associated with A-90." evidence="9 12 14">
    <original>S</original>
    <variation>A</variation>
    <location>
        <position position="92"/>
    </location>
</feature>
<feature type="mutagenesis site" description="Reduces binding to ARE-containing mRNAs and ARE-mediated mRNA decay. Inhibits binding to ARE-containing mRNAs and ARE-mediated mRNA decay; when associated with R-158." evidence="6 19">
    <original>C</original>
    <variation>R</variation>
    <location>
        <position position="120"/>
    </location>
</feature>
<feature type="mutagenesis site" description="Reduces binding to ARE-containing mRNAs and ARE-mediated mRNA decay. Inhibits binding to ARE-containing mRNAs and ARE-mediated mRNA decay; when associated with R-120." evidence="6 19">
    <original>C</original>
    <variation>R</variation>
    <location>
        <position position="158"/>
    </location>
</feature>
<feature type="mutagenesis site" description="Inhibits interaction with 14-3-3 proteins and AKT1-mediated ARE-containing mRNA stabilization; when associated with A-92. Inhibits MAPKAPK2-mediated ARE-containing mRNA stabilization; when associated with A-54 and A-92." evidence="12 14">
    <original>S</original>
    <variation>A</variation>
    <location>
        <position position="203"/>
    </location>
</feature>
<feature type="mutagenesis site" description="Inhibits p38 MAPK-mediated LDLR mRNA stabilization, but does not inhibit interaction with CNOT1 and CNOT7; when associated with A-336." evidence="21">
    <original>S</original>
    <variation>A</variation>
    <location>
        <position position="334"/>
    </location>
</feature>
<feature type="mutagenesis site" description="Inhibits p38 MAPK-mediated LDLR mRNA stabilization, but does not inhibit interaction with CNOT1 and CNOT7; when associated with A-334." evidence="21">
    <original>S</original>
    <variation>A</variation>
    <location>
        <position position="336"/>
    </location>
</feature>
<feature type="sequence conflict" description="In Ref. 3; CAA67781." evidence="28" ref="3">
    <original>H</original>
    <variation>R</variation>
    <location>
        <position position="63"/>
    </location>
</feature>
<protein>
    <recommendedName>
        <fullName evidence="28">mRNA decay activator protein ZFP36L1</fullName>
    </recommendedName>
    <alternativeName>
        <fullName evidence="24 25">Butyrate response factor 1</fullName>
    </alternativeName>
    <alternativeName>
        <fullName evidence="26">EGF-response factor 1</fullName>
        <shortName evidence="26">ERF-1</shortName>
    </alternativeName>
    <alternativeName>
        <fullName evidence="2">TPA-induced sequence 11b</fullName>
    </alternativeName>
    <alternativeName>
        <fullName evidence="29">Zinc finger protein 36, C3H1 type-like 1</fullName>
        <shortName evidence="29">ZFP36-like 1</shortName>
    </alternativeName>
</protein>
<name>TISB_HUMAN</name>
<evidence type="ECO:0000250" key="1">
    <source>
        <dbReference type="UniProtKB" id="P17431"/>
    </source>
</evidence>
<evidence type="ECO:0000250" key="2">
    <source>
        <dbReference type="UniProtKB" id="P23950"/>
    </source>
</evidence>
<evidence type="ECO:0000255" key="3">
    <source>
        <dbReference type="PROSITE-ProRule" id="PRU00723"/>
    </source>
</evidence>
<evidence type="ECO:0000256" key="4">
    <source>
        <dbReference type="SAM" id="MobiDB-lite"/>
    </source>
</evidence>
<evidence type="ECO:0000269" key="5">
    <source>
    </source>
</evidence>
<evidence type="ECO:0000269" key="6">
    <source>
    </source>
</evidence>
<evidence type="ECO:0000269" key="7">
    <source>
    </source>
</evidence>
<evidence type="ECO:0000269" key="8">
    <source>
    </source>
</evidence>
<evidence type="ECO:0000269" key="9">
    <source>
    </source>
</evidence>
<evidence type="ECO:0000269" key="10">
    <source>
    </source>
</evidence>
<evidence type="ECO:0000269" key="11">
    <source>
    </source>
</evidence>
<evidence type="ECO:0000269" key="12">
    <source>
    </source>
</evidence>
<evidence type="ECO:0000269" key="13">
    <source>
    </source>
</evidence>
<evidence type="ECO:0000269" key="14">
    <source>
    </source>
</evidence>
<evidence type="ECO:0000269" key="15">
    <source>
    </source>
</evidence>
<evidence type="ECO:0000269" key="16">
    <source>
    </source>
</evidence>
<evidence type="ECO:0000269" key="17">
    <source>
    </source>
</evidence>
<evidence type="ECO:0000269" key="18">
    <source>
    </source>
</evidence>
<evidence type="ECO:0000269" key="19">
    <source>
    </source>
</evidence>
<evidence type="ECO:0000269" key="20">
    <source>
    </source>
</evidence>
<evidence type="ECO:0000269" key="21">
    <source>
    </source>
</evidence>
<evidence type="ECO:0000269" key="22">
    <source>
    </source>
</evidence>
<evidence type="ECO:0000269" key="23">
    <source>
    </source>
</evidence>
<evidence type="ECO:0000303" key="24">
    <source>
    </source>
</evidence>
<evidence type="ECO:0000303" key="25">
    <source>
    </source>
</evidence>
<evidence type="ECO:0000303" key="26">
    <source>
    </source>
</evidence>
<evidence type="ECO:0000303" key="27">
    <source>
    </source>
</evidence>
<evidence type="ECO:0000305" key="28"/>
<evidence type="ECO:0000312" key="29">
    <source>
        <dbReference type="HGNC" id="HGNC:1107"/>
    </source>
</evidence>
<evidence type="ECO:0007744" key="30">
    <source>
    </source>
</evidence>
<evidence type="ECO:0007744" key="31">
    <source>
    </source>
</evidence>
<evidence type="ECO:0007744" key="32">
    <source>
    </source>
</evidence>
<sequence>MTTTLVSATIFDLSEVLCKGNKMLNYSAPSAGGCLLDRKAVGTPAGGGFPRRHSVTLPSSKFHQNQLLSSLKGEPAPALSSRDSRFRDRSFSEGGERLLPTQKQPGGGQVNSSRYKTELCRPFEENGACKYGDKCQFAHGIHELRSLTRHPKYKTELCRTFHTIGFCPYGPRCHFIHNAEERRALAGARDLSADRPRLQHSFSFAGFPSAAATAAATGLLDSPTSITPPPILSADDLLGSPTLPDGTNNPFAFSSQELASLFAPSMGLPGGGSPTTFLFRPMSESPHMFDSPPSPQDSLSDQEGYLSSSSSSHSGSDSPTLDNSRRLPIFSRLSISDD</sequence>